<comment type="function">
    <text evidence="1">DNA-dependent RNA polymerase catalyzes the transcription of DNA into RNA using the four ribonucleoside triphosphates as substrates.</text>
</comment>
<comment type="catalytic activity">
    <reaction evidence="1">
        <text>RNA(n) + a ribonucleoside 5'-triphosphate = RNA(n+1) + diphosphate</text>
        <dbReference type="Rhea" id="RHEA:21248"/>
        <dbReference type="Rhea" id="RHEA-COMP:14527"/>
        <dbReference type="Rhea" id="RHEA-COMP:17342"/>
        <dbReference type="ChEBI" id="CHEBI:33019"/>
        <dbReference type="ChEBI" id="CHEBI:61557"/>
        <dbReference type="ChEBI" id="CHEBI:140395"/>
        <dbReference type="EC" id="2.7.7.6"/>
    </reaction>
</comment>
<comment type="cofactor">
    <cofactor evidence="1">
        <name>Mg(2+)</name>
        <dbReference type="ChEBI" id="CHEBI:18420"/>
    </cofactor>
    <text evidence="1">Binds 1 Mg(2+) ion per subunit.</text>
</comment>
<comment type="cofactor">
    <cofactor evidence="1">
        <name>Zn(2+)</name>
        <dbReference type="ChEBI" id="CHEBI:29105"/>
    </cofactor>
    <text evidence="1">Binds 2 Zn(2+) ions per subunit.</text>
</comment>
<comment type="subunit">
    <text evidence="1">The RNAP catalytic core consists of 2 alpha, 1 beta, 1 beta' and 1 omega subunit. When a sigma factor is associated with the core the holoenzyme is formed, which can initiate transcription.</text>
</comment>
<comment type="similarity">
    <text evidence="1">Belongs to the RNA polymerase beta' chain family.</text>
</comment>
<comment type="sequence caution" evidence="2">
    <conflict type="erroneous initiation">
        <sequence resource="EMBL-CDS" id="AAM84074"/>
    </conflict>
    <text>Extended N-terminus.</text>
</comment>
<proteinExistence type="inferred from homology"/>
<keyword id="KW-0240">DNA-directed RNA polymerase</keyword>
<keyword id="KW-0460">Magnesium</keyword>
<keyword id="KW-0479">Metal-binding</keyword>
<keyword id="KW-0548">Nucleotidyltransferase</keyword>
<keyword id="KW-1185">Reference proteome</keyword>
<keyword id="KW-0804">Transcription</keyword>
<keyword id="KW-0808">Transferase</keyword>
<keyword id="KW-0862">Zinc</keyword>
<evidence type="ECO:0000255" key="1">
    <source>
        <dbReference type="HAMAP-Rule" id="MF_01322"/>
    </source>
</evidence>
<evidence type="ECO:0000305" key="2"/>
<organism>
    <name type="scientific">Yersinia pestis</name>
    <dbReference type="NCBI Taxonomy" id="632"/>
    <lineage>
        <taxon>Bacteria</taxon>
        <taxon>Pseudomonadati</taxon>
        <taxon>Pseudomonadota</taxon>
        <taxon>Gammaproteobacteria</taxon>
        <taxon>Enterobacterales</taxon>
        <taxon>Yersiniaceae</taxon>
        <taxon>Yersinia</taxon>
    </lineage>
</organism>
<reference key="1">
    <citation type="journal article" date="2001" name="Nature">
        <title>Genome sequence of Yersinia pestis, the causative agent of plague.</title>
        <authorList>
            <person name="Parkhill J."/>
            <person name="Wren B.W."/>
            <person name="Thomson N.R."/>
            <person name="Titball R.W."/>
            <person name="Holden M.T.G."/>
            <person name="Prentice M.B."/>
            <person name="Sebaihia M."/>
            <person name="James K.D."/>
            <person name="Churcher C.M."/>
            <person name="Mungall K.L."/>
            <person name="Baker S."/>
            <person name="Basham D."/>
            <person name="Bentley S.D."/>
            <person name="Brooks K."/>
            <person name="Cerdeno-Tarraga A.-M."/>
            <person name="Chillingworth T."/>
            <person name="Cronin A."/>
            <person name="Davies R.M."/>
            <person name="Davis P."/>
            <person name="Dougan G."/>
            <person name="Feltwell T."/>
            <person name="Hamlin N."/>
            <person name="Holroyd S."/>
            <person name="Jagels K."/>
            <person name="Karlyshev A.V."/>
            <person name="Leather S."/>
            <person name="Moule S."/>
            <person name="Oyston P.C.F."/>
            <person name="Quail M.A."/>
            <person name="Rutherford K.M."/>
            <person name="Simmonds M."/>
            <person name="Skelton J."/>
            <person name="Stevens K."/>
            <person name="Whitehead S."/>
            <person name="Barrell B.G."/>
        </authorList>
    </citation>
    <scope>NUCLEOTIDE SEQUENCE [LARGE SCALE GENOMIC DNA]</scope>
    <source>
        <strain>CO-92 / Biovar Orientalis</strain>
    </source>
</reference>
<reference key="2">
    <citation type="journal article" date="2002" name="J. Bacteriol.">
        <title>Genome sequence of Yersinia pestis KIM.</title>
        <authorList>
            <person name="Deng W."/>
            <person name="Burland V."/>
            <person name="Plunkett G. III"/>
            <person name="Boutin A."/>
            <person name="Mayhew G.F."/>
            <person name="Liss P."/>
            <person name="Perna N.T."/>
            <person name="Rose D.J."/>
            <person name="Mau B."/>
            <person name="Zhou S."/>
            <person name="Schwartz D.C."/>
            <person name="Fetherston J.D."/>
            <person name="Lindler L.E."/>
            <person name="Brubaker R.R."/>
            <person name="Plano G.V."/>
            <person name="Straley S.C."/>
            <person name="McDonough K.A."/>
            <person name="Nilles M.L."/>
            <person name="Matson J.S."/>
            <person name="Blattner F.R."/>
            <person name="Perry R.D."/>
        </authorList>
    </citation>
    <scope>NUCLEOTIDE SEQUENCE [LARGE SCALE GENOMIC DNA]</scope>
    <source>
        <strain>KIM10+ / Biovar Mediaevalis</strain>
    </source>
</reference>
<reference key="3">
    <citation type="journal article" date="2004" name="DNA Res.">
        <title>Complete genome sequence of Yersinia pestis strain 91001, an isolate avirulent to humans.</title>
        <authorList>
            <person name="Song Y."/>
            <person name="Tong Z."/>
            <person name="Wang J."/>
            <person name="Wang L."/>
            <person name="Guo Z."/>
            <person name="Han Y."/>
            <person name="Zhang J."/>
            <person name="Pei D."/>
            <person name="Zhou D."/>
            <person name="Qin H."/>
            <person name="Pang X."/>
            <person name="Han Y."/>
            <person name="Zhai J."/>
            <person name="Li M."/>
            <person name="Cui B."/>
            <person name="Qi Z."/>
            <person name="Jin L."/>
            <person name="Dai R."/>
            <person name="Chen F."/>
            <person name="Li S."/>
            <person name="Ye C."/>
            <person name="Du Z."/>
            <person name="Lin W."/>
            <person name="Wang J."/>
            <person name="Yu J."/>
            <person name="Yang H."/>
            <person name="Wang J."/>
            <person name="Huang P."/>
            <person name="Yang R."/>
        </authorList>
    </citation>
    <scope>NUCLEOTIDE SEQUENCE [LARGE SCALE GENOMIC DNA]</scope>
    <source>
        <strain>91001 / Biovar Mediaevalis</strain>
    </source>
</reference>
<accession>Q8D1H3</accession>
<accession>Q0WAR2</accession>
<accession>Q8ZAP6</accession>
<feature type="chain" id="PRO_0000067839" description="DNA-directed RNA polymerase subunit beta'">
    <location>
        <begin position="1"/>
        <end position="1406"/>
    </location>
</feature>
<feature type="binding site" evidence="1">
    <location>
        <position position="70"/>
    </location>
    <ligand>
        <name>Zn(2+)</name>
        <dbReference type="ChEBI" id="CHEBI:29105"/>
        <label>1</label>
    </ligand>
</feature>
<feature type="binding site" evidence="1">
    <location>
        <position position="72"/>
    </location>
    <ligand>
        <name>Zn(2+)</name>
        <dbReference type="ChEBI" id="CHEBI:29105"/>
        <label>1</label>
    </ligand>
</feature>
<feature type="binding site" evidence="1">
    <location>
        <position position="85"/>
    </location>
    <ligand>
        <name>Zn(2+)</name>
        <dbReference type="ChEBI" id="CHEBI:29105"/>
        <label>1</label>
    </ligand>
</feature>
<feature type="binding site" evidence="1">
    <location>
        <position position="88"/>
    </location>
    <ligand>
        <name>Zn(2+)</name>
        <dbReference type="ChEBI" id="CHEBI:29105"/>
        <label>1</label>
    </ligand>
</feature>
<feature type="binding site" evidence="1">
    <location>
        <position position="460"/>
    </location>
    <ligand>
        <name>Mg(2+)</name>
        <dbReference type="ChEBI" id="CHEBI:18420"/>
    </ligand>
</feature>
<feature type="binding site" evidence="1">
    <location>
        <position position="462"/>
    </location>
    <ligand>
        <name>Mg(2+)</name>
        <dbReference type="ChEBI" id="CHEBI:18420"/>
    </ligand>
</feature>
<feature type="binding site" evidence="1">
    <location>
        <position position="464"/>
    </location>
    <ligand>
        <name>Mg(2+)</name>
        <dbReference type="ChEBI" id="CHEBI:18420"/>
    </ligand>
</feature>
<feature type="binding site" evidence="1">
    <location>
        <position position="814"/>
    </location>
    <ligand>
        <name>Zn(2+)</name>
        <dbReference type="ChEBI" id="CHEBI:29105"/>
        <label>2</label>
    </ligand>
</feature>
<feature type="binding site" evidence="1">
    <location>
        <position position="888"/>
    </location>
    <ligand>
        <name>Zn(2+)</name>
        <dbReference type="ChEBI" id="CHEBI:29105"/>
        <label>2</label>
    </ligand>
</feature>
<feature type="binding site" evidence="1">
    <location>
        <position position="895"/>
    </location>
    <ligand>
        <name>Zn(2+)</name>
        <dbReference type="ChEBI" id="CHEBI:29105"/>
        <label>2</label>
    </ligand>
</feature>
<feature type="binding site" evidence="1">
    <location>
        <position position="898"/>
    </location>
    <ligand>
        <name>Zn(2+)</name>
        <dbReference type="ChEBI" id="CHEBI:29105"/>
        <label>2</label>
    </ligand>
</feature>
<sequence>MKDLLKFLKAQTKTEEFDAIKIALASPDMIRSWSFGEVKKPETINYRTFKPERDGLFCARIFGPVKDYECLCGKYKRLKHRGVICEKCGVEVTQTKVRRERMGHIELASPTAHIWFLKSLPSRIGLLLDMPLRDIERVLYFESYVVIEGGMTNLERRQILTEEQYLDALEEFGDEFDAKMGAEAIQALLKNMDLEAECEILREELNETNSETKRKKLTKRIKLLEAFVQSGNKPEWMILTVLPVLPPDLRPLVPLDGGRFATSDLNDLYRRVINRNNRLKRLLDLAAPDIIVRNEKRMLQEAVDALLDNGRRGRAITGSNKRPLKSLADMIKGKQGRFRQNLLGKRVDYSGRSVITVGPYLRLHQCGLPKKMALELFKPFIYGKLELRGLATTIKAAKKMVEREEAVVWDILDEVIREHPVLLNRAPTLHRLGIQAFEPVLIEGKAIQLHPLVCAAYNADFDGDQMAVHVPLTLEAQLEARALMMSTNNILSPANGEPIIVPSQDVVLGLYYMTRDCVNAKGEGMVLTGPKEAERIYRAGLASLHARVKVRITEEIRNTEGESITRTSIIDTTVGRAILWMIVPQGLPYSIVNQPLGKKAISKMLNTCYRILGLKPTVIFADQIMYTGFAYAARSGASVGIDDMVIPEAKAGIIEEAETEVAEIQEQFQSGLVTAGERYNKVIDIWAAANERVAKAMMDNLSVEDVVNRDGVVEQQVSFNSIFMMADSGARGSAAQIRQLAGMRGLMAKPDGSIIETPITANFREGLNVLQYFISTHGARKGLADTALKTANSGYLTRRLVDVAQDLVVTEDDCGTHNGIVMTPVIEGGDVKEPLRDRVLGRVTAEEVIKPGSADILVPRNTLLDEKWCDLLEENSVDSVKVRSVVSCETDFGVCANCYGRDLARGHIINKGEAVGVIAAQSIGEPGTQLTMRTFHIGGAASRAAAESSIQVKNKGSLKLSNVKFVTNAAGKLVITSRNTELKLIDEFGRTKESYKVPYGAVMAKGDGAEVQGGETVANWDPHIMPVVTEVSGFIRFADMVDGQTITRQTDELTGLSSLVVLDSAERTGSGKDLRPALKIVDAKGNDVLIPGTDMPAQYFLPGKAIVQLEDGIQIGAGDTLARIPQESSGTKDITGGLPRVADLFEARRPKEPAILAEISGIISFGKETKGKRRLVISPLDGSDAYEEMIPKWRQLNVFEGEVVERGDVVSDGPESPHDILRLRGVHAVTRYITNEVQEVYRLQGVKINDKHIEVIVRQMLRKGTIVDAGSTDFLEGEQAEMSRVKIANRKLAAEGKIEATFTRDLLGITKASLATESFISAASFQETTRVLTEAAVAGKRDELRGLKENVIVGRLIPAGTGYAYHQDRMRRKAQGEAPVVPQVSADEATANLAELLNAGFGNNKG</sequence>
<dbReference type="EC" id="2.7.7.6" evidence="1"/>
<dbReference type="EMBL" id="AL590842">
    <property type="protein sequence ID" value="CAL22333.1"/>
    <property type="molecule type" value="Genomic_DNA"/>
</dbReference>
<dbReference type="EMBL" id="AE009952">
    <property type="protein sequence ID" value="AAM84074.1"/>
    <property type="status" value="ALT_INIT"/>
    <property type="molecule type" value="Genomic_DNA"/>
</dbReference>
<dbReference type="EMBL" id="AE017042">
    <property type="protein sequence ID" value="AAS63279.1"/>
    <property type="molecule type" value="Genomic_DNA"/>
</dbReference>
<dbReference type="PIR" id="AB0456">
    <property type="entry name" value="AB0456"/>
</dbReference>
<dbReference type="RefSeq" id="WP_002210677.1">
    <property type="nucleotide sequence ID" value="NZ_WUCM01000099.1"/>
</dbReference>
<dbReference type="RefSeq" id="YP_002348626.1">
    <property type="nucleotide sequence ID" value="NC_003143.1"/>
</dbReference>
<dbReference type="SMR" id="Q8D1H3"/>
<dbReference type="IntAct" id="Q8D1H3">
    <property type="interactions" value="1"/>
</dbReference>
<dbReference type="STRING" id="214092.YPO3746"/>
<dbReference type="PaxDb" id="214092-YPO3746"/>
<dbReference type="DNASU" id="1145432"/>
<dbReference type="EnsemblBacteria" id="AAS63279">
    <property type="protein sequence ID" value="AAS63279"/>
    <property type="gene ID" value="YP_3109"/>
</dbReference>
<dbReference type="GeneID" id="96663777"/>
<dbReference type="KEGG" id="ype:YPO3746"/>
<dbReference type="KEGG" id="ypk:y0485"/>
<dbReference type="KEGG" id="ypm:YP_3109"/>
<dbReference type="PATRIC" id="fig|214092.21.peg.4264"/>
<dbReference type="eggNOG" id="COG0086">
    <property type="taxonomic scope" value="Bacteria"/>
</dbReference>
<dbReference type="HOGENOM" id="CLU_000524_3_1_6"/>
<dbReference type="OMA" id="QDMIIGL"/>
<dbReference type="OrthoDB" id="9815296at2"/>
<dbReference type="Proteomes" id="UP000000815">
    <property type="component" value="Chromosome"/>
</dbReference>
<dbReference type="Proteomes" id="UP000001019">
    <property type="component" value="Chromosome"/>
</dbReference>
<dbReference type="Proteomes" id="UP000002490">
    <property type="component" value="Chromosome"/>
</dbReference>
<dbReference type="GO" id="GO:0000428">
    <property type="term" value="C:DNA-directed RNA polymerase complex"/>
    <property type="evidence" value="ECO:0007669"/>
    <property type="project" value="UniProtKB-KW"/>
</dbReference>
<dbReference type="GO" id="GO:0003677">
    <property type="term" value="F:DNA binding"/>
    <property type="evidence" value="ECO:0007669"/>
    <property type="project" value="UniProtKB-UniRule"/>
</dbReference>
<dbReference type="GO" id="GO:0003899">
    <property type="term" value="F:DNA-directed RNA polymerase activity"/>
    <property type="evidence" value="ECO:0007669"/>
    <property type="project" value="UniProtKB-UniRule"/>
</dbReference>
<dbReference type="GO" id="GO:0000287">
    <property type="term" value="F:magnesium ion binding"/>
    <property type="evidence" value="ECO:0007669"/>
    <property type="project" value="UniProtKB-UniRule"/>
</dbReference>
<dbReference type="GO" id="GO:0008270">
    <property type="term" value="F:zinc ion binding"/>
    <property type="evidence" value="ECO:0007669"/>
    <property type="project" value="UniProtKB-UniRule"/>
</dbReference>
<dbReference type="GO" id="GO:0006351">
    <property type="term" value="P:DNA-templated transcription"/>
    <property type="evidence" value="ECO:0007669"/>
    <property type="project" value="UniProtKB-UniRule"/>
</dbReference>
<dbReference type="CDD" id="cd02655">
    <property type="entry name" value="RNAP_beta'_C"/>
    <property type="match status" value="1"/>
</dbReference>
<dbReference type="CDD" id="cd01609">
    <property type="entry name" value="RNAP_beta'_N"/>
    <property type="match status" value="1"/>
</dbReference>
<dbReference type="FunFam" id="1.10.132.30:FF:000003">
    <property type="entry name" value="DNA-directed RNA polymerase subunit beta"/>
    <property type="match status" value="1"/>
</dbReference>
<dbReference type="FunFam" id="1.10.150.390:FF:000002">
    <property type="entry name" value="DNA-directed RNA polymerase subunit beta"/>
    <property type="match status" value="1"/>
</dbReference>
<dbReference type="FunFam" id="1.10.274.100:FF:000002">
    <property type="entry name" value="DNA-directed RNA polymerase subunit beta"/>
    <property type="match status" value="1"/>
</dbReference>
<dbReference type="FunFam" id="1.10.40.90:FF:000001">
    <property type="entry name" value="DNA-directed RNA polymerase subunit beta"/>
    <property type="match status" value="1"/>
</dbReference>
<dbReference type="FunFam" id="2.40.50.100:FF:000012">
    <property type="entry name" value="DNA-directed RNA polymerase subunit beta"/>
    <property type="match status" value="1"/>
</dbReference>
<dbReference type="FunFam" id="2.40.50.100:FF:000016">
    <property type="entry name" value="DNA-directed RNA polymerase subunit beta"/>
    <property type="match status" value="1"/>
</dbReference>
<dbReference type="FunFam" id="2.40.50.100:FF:000019">
    <property type="entry name" value="DNA-directed RNA polymerase subunit beta"/>
    <property type="match status" value="1"/>
</dbReference>
<dbReference type="FunFam" id="4.10.860.120:FF:000001">
    <property type="entry name" value="DNA-directed RNA polymerase subunit beta"/>
    <property type="match status" value="1"/>
</dbReference>
<dbReference type="Gene3D" id="1.10.132.30">
    <property type="match status" value="1"/>
</dbReference>
<dbReference type="Gene3D" id="1.10.150.390">
    <property type="match status" value="1"/>
</dbReference>
<dbReference type="Gene3D" id="1.10.1790.20">
    <property type="match status" value="1"/>
</dbReference>
<dbReference type="Gene3D" id="1.10.40.90">
    <property type="match status" value="1"/>
</dbReference>
<dbReference type="Gene3D" id="2.40.40.20">
    <property type="match status" value="1"/>
</dbReference>
<dbReference type="Gene3D" id="2.40.50.100">
    <property type="match status" value="3"/>
</dbReference>
<dbReference type="Gene3D" id="4.10.860.120">
    <property type="entry name" value="RNA polymerase II, clamp domain"/>
    <property type="match status" value="1"/>
</dbReference>
<dbReference type="Gene3D" id="1.10.274.100">
    <property type="entry name" value="RNA polymerase Rpb1, domain 3"/>
    <property type="match status" value="1"/>
</dbReference>
<dbReference type="HAMAP" id="MF_01322">
    <property type="entry name" value="RNApol_bact_RpoC"/>
    <property type="match status" value="1"/>
</dbReference>
<dbReference type="InterPro" id="IPR045867">
    <property type="entry name" value="DNA-dir_RpoC_beta_prime"/>
</dbReference>
<dbReference type="InterPro" id="IPR012754">
    <property type="entry name" value="DNA-dir_RpoC_beta_prime_bact"/>
</dbReference>
<dbReference type="InterPro" id="IPR000722">
    <property type="entry name" value="RNA_pol_asu"/>
</dbReference>
<dbReference type="InterPro" id="IPR006592">
    <property type="entry name" value="RNA_pol_N"/>
</dbReference>
<dbReference type="InterPro" id="IPR007080">
    <property type="entry name" value="RNA_pol_Rpb1_1"/>
</dbReference>
<dbReference type="InterPro" id="IPR007066">
    <property type="entry name" value="RNA_pol_Rpb1_3"/>
</dbReference>
<dbReference type="InterPro" id="IPR042102">
    <property type="entry name" value="RNA_pol_Rpb1_3_sf"/>
</dbReference>
<dbReference type="InterPro" id="IPR007083">
    <property type="entry name" value="RNA_pol_Rpb1_4"/>
</dbReference>
<dbReference type="InterPro" id="IPR007081">
    <property type="entry name" value="RNA_pol_Rpb1_5"/>
</dbReference>
<dbReference type="InterPro" id="IPR044893">
    <property type="entry name" value="RNA_pol_Rpb1_clamp_domain"/>
</dbReference>
<dbReference type="InterPro" id="IPR038120">
    <property type="entry name" value="Rpb1_funnel_sf"/>
</dbReference>
<dbReference type="NCBIfam" id="TIGR02386">
    <property type="entry name" value="rpoC_TIGR"/>
    <property type="match status" value="1"/>
</dbReference>
<dbReference type="PANTHER" id="PTHR19376">
    <property type="entry name" value="DNA-DIRECTED RNA POLYMERASE"/>
    <property type="match status" value="1"/>
</dbReference>
<dbReference type="PANTHER" id="PTHR19376:SF54">
    <property type="entry name" value="DNA-DIRECTED RNA POLYMERASE SUBUNIT BETA"/>
    <property type="match status" value="1"/>
</dbReference>
<dbReference type="Pfam" id="PF04997">
    <property type="entry name" value="RNA_pol_Rpb1_1"/>
    <property type="match status" value="1"/>
</dbReference>
<dbReference type="Pfam" id="PF00623">
    <property type="entry name" value="RNA_pol_Rpb1_2"/>
    <property type="match status" value="2"/>
</dbReference>
<dbReference type="Pfam" id="PF04983">
    <property type="entry name" value="RNA_pol_Rpb1_3"/>
    <property type="match status" value="1"/>
</dbReference>
<dbReference type="Pfam" id="PF05000">
    <property type="entry name" value="RNA_pol_Rpb1_4"/>
    <property type="match status" value="1"/>
</dbReference>
<dbReference type="Pfam" id="PF04998">
    <property type="entry name" value="RNA_pol_Rpb1_5"/>
    <property type="match status" value="1"/>
</dbReference>
<dbReference type="SMART" id="SM00663">
    <property type="entry name" value="RPOLA_N"/>
    <property type="match status" value="1"/>
</dbReference>
<dbReference type="SUPFAM" id="SSF64484">
    <property type="entry name" value="beta and beta-prime subunits of DNA dependent RNA-polymerase"/>
    <property type="match status" value="1"/>
</dbReference>
<protein>
    <recommendedName>
        <fullName evidence="1">DNA-directed RNA polymerase subunit beta'</fullName>
        <shortName evidence="1">RNAP subunit beta'</shortName>
        <ecNumber evidence="1">2.7.7.6</ecNumber>
    </recommendedName>
    <alternativeName>
        <fullName evidence="1">RNA polymerase subunit beta'</fullName>
    </alternativeName>
    <alternativeName>
        <fullName evidence="1">Transcriptase subunit beta'</fullName>
    </alternativeName>
</protein>
<name>RPOC_YERPE</name>
<gene>
    <name evidence="1" type="primary">rpoC</name>
    <name type="ordered locus">YPO3746</name>
    <name type="ordered locus">y0485</name>
    <name type="ordered locus">YP_3109</name>
</gene>